<keyword id="KW-0028">Amino-acid biosynthesis</keyword>
<keyword id="KW-0378">Hydrolase</keyword>
<keyword id="KW-0460">Magnesium</keyword>
<keyword id="KW-0479">Metal-binding</keyword>
<keyword id="KW-1185">Reference proteome</keyword>
<keyword id="KW-0718">Serine biosynthesis</keyword>
<gene>
    <name type="primary">serB</name>
    <name type="ordered locus">Z5989</name>
    <name type="ordered locus">ECs5346</name>
</gene>
<comment type="function">
    <text evidence="1">Catalyzes the dephosphorylation of phosphoserine (P-Ser).</text>
</comment>
<comment type="catalytic activity">
    <reaction>
        <text>O-phospho-L-serine + H2O = L-serine + phosphate</text>
        <dbReference type="Rhea" id="RHEA:21208"/>
        <dbReference type="ChEBI" id="CHEBI:15377"/>
        <dbReference type="ChEBI" id="CHEBI:33384"/>
        <dbReference type="ChEBI" id="CHEBI:43474"/>
        <dbReference type="ChEBI" id="CHEBI:57524"/>
        <dbReference type="EC" id="3.1.3.3"/>
    </reaction>
</comment>
<comment type="catalytic activity">
    <reaction>
        <text>O-phospho-D-serine + H2O = D-serine + phosphate</text>
        <dbReference type="Rhea" id="RHEA:24873"/>
        <dbReference type="ChEBI" id="CHEBI:15377"/>
        <dbReference type="ChEBI" id="CHEBI:35247"/>
        <dbReference type="ChEBI" id="CHEBI:43474"/>
        <dbReference type="ChEBI" id="CHEBI:58680"/>
        <dbReference type="EC" id="3.1.3.3"/>
    </reaction>
</comment>
<comment type="cofactor">
    <cofactor evidence="1">
        <name>Mg(2+)</name>
        <dbReference type="ChEBI" id="CHEBI:18420"/>
    </cofactor>
    <text evidence="1">Binds 1 Mg(2+) ion per subunit.</text>
</comment>
<comment type="pathway">
    <text>Amino-acid biosynthesis; L-serine biosynthesis; L-serine from 3-phospho-D-glycerate: step 3/3.</text>
</comment>
<comment type="similarity">
    <text evidence="2">Belongs to the HAD-like hydrolase superfamily. SerB family.</text>
</comment>
<organism>
    <name type="scientific">Escherichia coli O157:H7</name>
    <dbReference type="NCBI Taxonomy" id="83334"/>
    <lineage>
        <taxon>Bacteria</taxon>
        <taxon>Pseudomonadati</taxon>
        <taxon>Pseudomonadota</taxon>
        <taxon>Gammaproteobacteria</taxon>
        <taxon>Enterobacterales</taxon>
        <taxon>Enterobacteriaceae</taxon>
        <taxon>Escherichia</taxon>
    </lineage>
</organism>
<feature type="chain" id="PRO_0000156887" description="Phosphoserine phosphatase">
    <location>
        <begin position="1"/>
        <end position="322"/>
    </location>
</feature>
<feature type="active site" description="Nucleophile" evidence="1">
    <location>
        <position position="116"/>
    </location>
</feature>
<feature type="active site" description="Proton donor" evidence="1">
    <location>
        <position position="118"/>
    </location>
</feature>
<feature type="binding site" evidence="1">
    <location>
        <begin position="10"/>
        <end position="12"/>
    </location>
    <ligand>
        <name>substrate</name>
    </ligand>
</feature>
<feature type="binding site" evidence="1">
    <location>
        <position position="12"/>
    </location>
    <ligand>
        <name>Mg(2+)</name>
        <dbReference type="ChEBI" id="CHEBI:18420"/>
    </ligand>
</feature>
<feature type="binding site" evidence="1">
    <location>
        <position position="116"/>
    </location>
    <ligand>
        <name>Mg(2+)</name>
        <dbReference type="ChEBI" id="CHEBI:18420"/>
    </ligand>
</feature>
<feature type="binding site" evidence="1">
    <location>
        <position position="118"/>
    </location>
    <ligand>
        <name>Mg(2+)</name>
        <dbReference type="ChEBI" id="CHEBI:18420"/>
    </ligand>
</feature>
<feature type="binding site" evidence="1">
    <location>
        <position position="125"/>
    </location>
    <ligand>
        <name>substrate</name>
    </ligand>
</feature>
<feature type="binding site" evidence="1">
    <location>
        <position position="161"/>
    </location>
    <ligand>
        <name>substrate</name>
    </ligand>
</feature>
<feature type="binding site" evidence="1">
    <location>
        <begin position="204"/>
        <end position="205"/>
    </location>
    <ligand>
        <name>substrate</name>
    </ligand>
</feature>
<feature type="binding site" evidence="1">
    <location>
        <position position="249"/>
    </location>
    <ligand>
        <name>substrate</name>
    </ligand>
</feature>
<feature type="binding site" evidence="1">
    <location>
        <position position="272"/>
    </location>
    <ligand>
        <name>Mg(2+)</name>
        <dbReference type="ChEBI" id="CHEBI:18420"/>
    </ligand>
</feature>
<feature type="binding site" evidence="1">
    <location>
        <position position="275"/>
    </location>
    <ligand>
        <name>substrate</name>
    </ligand>
</feature>
<sequence>MPNITWCDLPEDVSLWPGLPLSLSGDEVMPLDYHAGRSGWLLYGRGLDKQRLTQYQSKLGAAMVIVAAWCVEDYQVIRLAGSLTARATRLAHEAQLDVAPLGKIPHLRTPGLLVMDMDSTAIQIECIDEIAKLAGTGEMVAEVTERAMRGELDFTASLRSRVATLKGADANILQQVRENLPLMPGLTQLVLKLETLGWKVAIASGGFTFFAEYLRDKLRLTAVVANELEIMDGKFTGNVIGDIVDAQYKAKTLTRLAQEYEIPLAQTVAIGDGANDLPMIKAAGLGIAYHAKPKVNEKAEVTIRHADLMGVFCILSGSLNQK</sequence>
<reference key="1">
    <citation type="journal article" date="2001" name="Nature">
        <title>Genome sequence of enterohaemorrhagic Escherichia coli O157:H7.</title>
        <authorList>
            <person name="Perna N.T."/>
            <person name="Plunkett G. III"/>
            <person name="Burland V."/>
            <person name="Mau B."/>
            <person name="Glasner J.D."/>
            <person name="Rose D.J."/>
            <person name="Mayhew G.F."/>
            <person name="Evans P.S."/>
            <person name="Gregor J."/>
            <person name="Kirkpatrick H.A."/>
            <person name="Posfai G."/>
            <person name="Hackett J."/>
            <person name="Klink S."/>
            <person name="Boutin A."/>
            <person name="Shao Y."/>
            <person name="Miller L."/>
            <person name="Grotbeck E.J."/>
            <person name="Davis N.W."/>
            <person name="Lim A."/>
            <person name="Dimalanta E.T."/>
            <person name="Potamousis K."/>
            <person name="Apodaca J."/>
            <person name="Anantharaman T.S."/>
            <person name="Lin J."/>
            <person name="Yen G."/>
            <person name="Schwartz D.C."/>
            <person name="Welch R.A."/>
            <person name="Blattner F.R."/>
        </authorList>
    </citation>
    <scope>NUCLEOTIDE SEQUENCE [LARGE SCALE GENOMIC DNA]</scope>
    <source>
        <strain>O157:H7 / EDL933 / ATCC 700927 / EHEC</strain>
    </source>
</reference>
<reference key="2">
    <citation type="journal article" date="2001" name="DNA Res.">
        <title>Complete genome sequence of enterohemorrhagic Escherichia coli O157:H7 and genomic comparison with a laboratory strain K-12.</title>
        <authorList>
            <person name="Hayashi T."/>
            <person name="Makino K."/>
            <person name="Ohnishi M."/>
            <person name="Kurokawa K."/>
            <person name="Ishii K."/>
            <person name="Yokoyama K."/>
            <person name="Han C.-G."/>
            <person name="Ohtsubo E."/>
            <person name="Nakayama K."/>
            <person name="Murata T."/>
            <person name="Tanaka M."/>
            <person name="Tobe T."/>
            <person name="Iida T."/>
            <person name="Takami H."/>
            <person name="Honda T."/>
            <person name="Sasakawa C."/>
            <person name="Ogasawara N."/>
            <person name="Yasunaga T."/>
            <person name="Kuhara S."/>
            <person name="Shiba T."/>
            <person name="Hattori M."/>
            <person name="Shinagawa H."/>
        </authorList>
    </citation>
    <scope>NUCLEOTIDE SEQUENCE [LARGE SCALE GENOMIC DNA]</scope>
    <source>
        <strain>O157:H7 / Sakai / RIMD 0509952 / EHEC</strain>
    </source>
</reference>
<protein>
    <recommendedName>
        <fullName>Phosphoserine phosphatase</fullName>
        <shortName>PSP</shortName>
        <shortName>PSPase</shortName>
        <ecNumber>3.1.3.3</ecNumber>
    </recommendedName>
    <alternativeName>
        <fullName>O-phosphoserine phosphohydrolase</fullName>
    </alternativeName>
</protein>
<name>SERB_ECO57</name>
<evidence type="ECO:0000250" key="1"/>
<evidence type="ECO:0000305" key="2"/>
<proteinExistence type="inferred from homology"/>
<accession>P0AGB1</accession>
<accession>P06862</accession>
<dbReference type="EC" id="3.1.3.3"/>
<dbReference type="EMBL" id="AE005174">
    <property type="protein sequence ID" value="AAG59568.1"/>
    <property type="molecule type" value="Genomic_DNA"/>
</dbReference>
<dbReference type="EMBL" id="BA000007">
    <property type="protein sequence ID" value="BAB38769.1"/>
    <property type="molecule type" value="Genomic_DNA"/>
</dbReference>
<dbReference type="PIR" id="B91297">
    <property type="entry name" value="B91297"/>
</dbReference>
<dbReference type="RefSeq" id="NP_313373.1">
    <property type="nucleotide sequence ID" value="NC_002695.1"/>
</dbReference>
<dbReference type="RefSeq" id="WP_001132955.1">
    <property type="nucleotide sequence ID" value="NZ_VOAI01000002.1"/>
</dbReference>
<dbReference type="SMR" id="P0AGB1"/>
<dbReference type="STRING" id="155864.Z5989"/>
<dbReference type="GeneID" id="913496"/>
<dbReference type="GeneID" id="93777457"/>
<dbReference type="KEGG" id="ece:Z5989"/>
<dbReference type="KEGG" id="ecs:ECs_5346"/>
<dbReference type="PATRIC" id="fig|386585.9.peg.5593"/>
<dbReference type="eggNOG" id="COG0560">
    <property type="taxonomic scope" value="Bacteria"/>
</dbReference>
<dbReference type="HOGENOM" id="CLU_036368_4_0_6"/>
<dbReference type="OMA" id="LSMFKHA"/>
<dbReference type="UniPathway" id="UPA00135">
    <property type="reaction ID" value="UER00198"/>
</dbReference>
<dbReference type="Proteomes" id="UP000000558">
    <property type="component" value="Chromosome"/>
</dbReference>
<dbReference type="Proteomes" id="UP000002519">
    <property type="component" value="Chromosome"/>
</dbReference>
<dbReference type="GO" id="GO:0005737">
    <property type="term" value="C:cytoplasm"/>
    <property type="evidence" value="ECO:0007669"/>
    <property type="project" value="TreeGrafter"/>
</dbReference>
<dbReference type="GO" id="GO:0036424">
    <property type="term" value="F:L-phosphoserine phosphatase activity"/>
    <property type="evidence" value="ECO:0007669"/>
    <property type="project" value="InterPro"/>
</dbReference>
<dbReference type="GO" id="GO:0000287">
    <property type="term" value="F:magnesium ion binding"/>
    <property type="evidence" value="ECO:0007669"/>
    <property type="project" value="TreeGrafter"/>
</dbReference>
<dbReference type="GO" id="GO:0006564">
    <property type="term" value="P:L-serine biosynthetic process"/>
    <property type="evidence" value="ECO:0007669"/>
    <property type="project" value="UniProtKB-KW"/>
</dbReference>
<dbReference type="CDD" id="cd07500">
    <property type="entry name" value="HAD_PSP"/>
    <property type="match status" value="1"/>
</dbReference>
<dbReference type="FunFam" id="1.10.150.210:FF:000001">
    <property type="entry name" value="Phosphoserine phosphatase"/>
    <property type="match status" value="1"/>
</dbReference>
<dbReference type="FunFam" id="3.40.50.1000:FF:000048">
    <property type="entry name" value="Phosphoserine phosphatase"/>
    <property type="match status" value="1"/>
</dbReference>
<dbReference type="Gene3D" id="3.30.70.2020">
    <property type="match status" value="1"/>
</dbReference>
<dbReference type="Gene3D" id="3.40.50.1000">
    <property type="entry name" value="HAD superfamily/HAD-like"/>
    <property type="match status" value="1"/>
</dbReference>
<dbReference type="Gene3D" id="1.10.150.210">
    <property type="entry name" value="Phosphoserine phosphatase, domain 2"/>
    <property type="match status" value="1"/>
</dbReference>
<dbReference type="InterPro" id="IPR050582">
    <property type="entry name" value="HAD-like_SerB"/>
</dbReference>
<dbReference type="InterPro" id="IPR036412">
    <property type="entry name" value="HAD-like_sf"/>
</dbReference>
<dbReference type="InterPro" id="IPR023214">
    <property type="entry name" value="HAD_sf"/>
</dbReference>
<dbReference type="InterPro" id="IPR004469">
    <property type="entry name" value="PSP"/>
</dbReference>
<dbReference type="InterPro" id="IPR041449">
    <property type="entry name" value="SerB_N"/>
</dbReference>
<dbReference type="NCBIfam" id="TIGR01488">
    <property type="entry name" value="HAD-SF-IB"/>
    <property type="match status" value="1"/>
</dbReference>
<dbReference type="NCBIfam" id="NF008350">
    <property type="entry name" value="PRK11133.1"/>
    <property type="match status" value="1"/>
</dbReference>
<dbReference type="NCBIfam" id="TIGR00338">
    <property type="entry name" value="serB"/>
    <property type="match status" value="1"/>
</dbReference>
<dbReference type="PANTHER" id="PTHR43344">
    <property type="entry name" value="PHOSPHOSERINE PHOSPHATASE"/>
    <property type="match status" value="1"/>
</dbReference>
<dbReference type="PANTHER" id="PTHR43344:SF2">
    <property type="entry name" value="PHOSPHOSERINE PHOSPHATASE"/>
    <property type="match status" value="1"/>
</dbReference>
<dbReference type="Pfam" id="PF18429">
    <property type="entry name" value="DUF5609"/>
    <property type="match status" value="1"/>
</dbReference>
<dbReference type="Pfam" id="PF12710">
    <property type="entry name" value="HAD"/>
    <property type="match status" value="1"/>
</dbReference>
<dbReference type="SFLD" id="SFLDG01136">
    <property type="entry name" value="C1.6:_Phosphoserine_Phosphatas"/>
    <property type="match status" value="1"/>
</dbReference>
<dbReference type="SFLD" id="SFLDF00029">
    <property type="entry name" value="phosphoserine_phosphatase"/>
    <property type="match status" value="1"/>
</dbReference>
<dbReference type="SUPFAM" id="SSF56784">
    <property type="entry name" value="HAD-like"/>
    <property type="match status" value="1"/>
</dbReference>